<name>PSMF1_HUMAN</name>
<organism>
    <name type="scientific">Homo sapiens</name>
    <name type="common">Human</name>
    <dbReference type="NCBI Taxonomy" id="9606"/>
    <lineage>
        <taxon>Eukaryota</taxon>
        <taxon>Metazoa</taxon>
        <taxon>Chordata</taxon>
        <taxon>Craniata</taxon>
        <taxon>Vertebrata</taxon>
        <taxon>Euteleostomi</taxon>
        <taxon>Mammalia</taxon>
        <taxon>Eutheria</taxon>
        <taxon>Euarchontoglires</taxon>
        <taxon>Primates</taxon>
        <taxon>Haplorrhini</taxon>
        <taxon>Catarrhini</taxon>
        <taxon>Hominidae</taxon>
        <taxon>Homo</taxon>
    </lineage>
</organism>
<proteinExistence type="evidence at protein level"/>
<reference key="1">
    <citation type="journal article" date="2000" name="J. Biol. Chem.">
        <title>cDNA cloning, expression, and functional characterization of PI31, a proline-rich inhibitor of the proteasome.</title>
        <authorList>
            <person name="McCutchen-Maloney S.L."/>
            <person name="Matsuda K."/>
            <person name="Shimbara N."/>
            <person name="Binns D.D."/>
            <person name="Tanaka K."/>
            <person name="Slaughter C.A."/>
            <person name="DeMartino G.N."/>
        </authorList>
    </citation>
    <scope>NUCLEOTIDE SEQUENCE [MRNA]</scope>
    <scope>VARIANT CYS-36</scope>
    <scope>FUNCTION</scope>
    <scope>SUBUNIT</scope>
</reference>
<reference key="2">
    <citation type="journal article" date="2001" name="Nature">
        <title>The DNA sequence and comparative analysis of human chromosome 20.</title>
        <authorList>
            <person name="Deloukas P."/>
            <person name="Matthews L.H."/>
            <person name="Ashurst J.L."/>
            <person name="Burton J."/>
            <person name="Gilbert J.G.R."/>
            <person name="Jones M."/>
            <person name="Stavrides G."/>
            <person name="Almeida J.P."/>
            <person name="Babbage A.K."/>
            <person name="Bagguley C.L."/>
            <person name="Bailey J."/>
            <person name="Barlow K.F."/>
            <person name="Bates K.N."/>
            <person name="Beard L.M."/>
            <person name="Beare D.M."/>
            <person name="Beasley O.P."/>
            <person name="Bird C.P."/>
            <person name="Blakey S.E."/>
            <person name="Bridgeman A.M."/>
            <person name="Brown A.J."/>
            <person name="Buck D."/>
            <person name="Burrill W.D."/>
            <person name="Butler A.P."/>
            <person name="Carder C."/>
            <person name="Carter N.P."/>
            <person name="Chapman J.C."/>
            <person name="Clamp M."/>
            <person name="Clark G."/>
            <person name="Clark L.N."/>
            <person name="Clark S.Y."/>
            <person name="Clee C.M."/>
            <person name="Clegg S."/>
            <person name="Cobley V.E."/>
            <person name="Collier R.E."/>
            <person name="Connor R.E."/>
            <person name="Corby N.R."/>
            <person name="Coulson A."/>
            <person name="Coville G.J."/>
            <person name="Deadman R."/>
            <person name="Dhami P.D."/>
            <person name="Dunn M."/>
            <person name="Ellington A.G."/>
            <person name="Frankland J.A."/>
            <person name="Fraser A."/>
            <person name="French L."/>
            <person name="Garner P."/>
            <person name="Grafham D.V."/>
            <person name="Griffiths C."/>
            <person name="Griffiths M.N.D."/>
            <person name="Gwilliam R."/>
            <person name="Hall R.E."/>
            <person name="Hammond S."/>
            <person name="Harley J.L."/>
            <person name="Heath P.D."/>
            <person name="Ho S."/>
            <person name="Holden J.L."/>
            <person name="Howden P.J."/>
            <person name="Huckle E."/>
            <person name="Hunt A.R."/>
            <person name="Hunt S.E."/>
            <person name="Jekosch K."/>
            <person name="Johnson C.M."/>
            <person name="Johnson D."/>
            <person name="Kay M.P."/>
            <person name="Kimberley A.M."/>
            <person name="King A."/>
            <person name="Knights A."/>
            <person name="Laird G.K."/>
            <person name="Lawlor S."/>
            <person name="Lehvaeslaiho M.H."/>
            <person name="Leversha M.A."/>
            <person name="Lloyd C."/>
            <person name="Lloyd D.M."/>
            <person name="Lovell J.D."/>
            <person name="Marsh V.L."/>
            <person name="Martin S.L."/>
            <person name="McConnachie L.J."/>
            <person name="McLay K."/>
            <person name="McMurray A.A."/>
            <person name="Milne S.A."/>
            <person name="Mistry D."/>
            <person name="Moore M.J.F."/>
            <person name="Mullikin J.C."/>
            <person name="Nickerson T."/>
            <person name="Oliver K."/>
            <person name="Parker A."/>
            <person name="Patel R."/>
            <person name="Pearce T.A.V."/>
            <person name="Peck A.I."/>
            <person name="Phillimore B.J.C.T."/>
            <person name="Prathalingam S.R."/>
            <person name="Plumb R.W."/>
            <person name="Ramsay H."/>
            <person name="Rice C.M."/>
            <person name="Ross M.T."/>
            <person name="Scott C.E."/>
            <person name="Sehra H.K."/>
            <person name="Shownkeen R."/>
            <person name="Sims S."/>
            <person name="Skuce C.D."/>
            <person name="Smith M.L."/>
            <person name="Soderlund C."/>
            <person name="Steward C.A."/>
            <person name="Sulston J.E."/>
            <person name="Swann R.M."/>
            <person name="Sycamore N."/>
            <person name="Taylor R."/>
            <person name="Tee L."/>
            <person name="Thomas D.W."/>
            <person name="Thorpe A."/>
            <person name="Tracey A."/>
            <person name="Tromans A.C."/>
            <person name="Vaudin M."/>
            <person name="Wall M."/>
            <person name="Wallis J.M."/>
            <person name="Whitehead S.L."/>
            <person name="Whittaker P."/>
            <person name="Willey D.L."/>
            <person name="Williams L."/>
            <person name="Williams S.A."/>
            <person name="Wilming L."/>
            <person name="Wray P.W."/>
            <person name="Hubbard T."/>
            <person name="Durbin R.M."/>
            <person name="Bentley D.R."/>
            <person name="Beck S."/>
            <person name="Rogers J."/>
        </authorList>
    </citation>
    <scope>NUCLEOTIDE SEQUENCE [LARGE SCALE GENOMIC DNA]</scope>
</reference>
<reference key="3">
    <citation type="submission" date="2005-09" db="EMBL/GenBank/DDBJ databases">
        <authorList>
            <person name="Mural R.J."/>
            <person name="Istrail S."/>
            <person name="Sutton G.G."/>
            <person name="Florea L."/>
            <person name="Halpern A.L."/>
            <person name="Mobarry C.M."/>
            <person name="Lippert R."/>
            <person name="Walenz B."/>
            <person name="Shatkay H."/>
            <person name="Dew I."/>
            <person name="Miller J.R."/>
            <person name="Flanigan M.J."/>
            <person name="Edwards N.J."/>
            <person name="Bolanos R."/>
            <person name="Fasulo D."/>
            <person name="Halldorsson B.V."/>
            <person name="Hannenhalli S."/>
            <person name="Turner R."/>
            <person name="Yooseph S."/>
            <person name="Lu F."/>
            <person name="Nusskern D.R."/>
            <person name="Shue B.C."/>
            <person name="Zheng X.H."/>
            <person name="Zhong F."/>
            <person name="Delcher A.L."/>
            <person name="Huson D.H."/>
            <person name="Kravitz S.A."/>
            <person name="Mouchard L."/>
            <person name="Reinert K."/>
            <person name="Remington K.A."/>
            <person name="Clark A.G."/>
            <person name="Waterman M.S."/>
            <person name="Eichler E.E."/>
            <person name="Adams M.D."/>
            <person name="Hunkapiller M.W."/>
            <person name="Myers E.W."/>
            <person name="Venter J.C."/>
        </authorList>
    </citation>
    <scope>NUCLEOTIDE SEQUENCE [LARGE SCALE GENOMIC DNA]</scope>
    <scope>VARIANT CYS-36</scope>
</reference>
<reference key="4">
    <citation type="journal article" date="2004" name="Genome Res.">
        <title>The status, quality, and expansion of the NIH full-length cDNA project: the Mammalian Gene Collection (MGC).</title>
        <authorList>
            <consortium name="The MGC Project Team"/>
        </authorList>
    </citation>
    <scope>NUCLEOTIDE SEQUENCE [LARGE SCALE MRNA]</scope>
    <scope>VARIANT CYS-36</scope>
</reference>
<reference key="5">
    <citation type="journal article" date="2008" name="Proc. Natl. Acad. Sci. U.S.A.">
        <title>A quantitative atlas of mitotic phosphorylation.</title>
        <authorList>
            <person name="Dephoure N."/>
            <person name="Zhou C."/>
            <person name="Villen J."/>
            <person name="Beausoleil S.A."/>
            <person name="Bakalarski C.E."/>
            <person name="Elledge S.J."/>
            <person name="Gygi S.P."/>
        </authorList>
    </citation>
    <scope>PHOSPHORYLATION [LARGE SCALE ANALYSIS] AT SER-252</scope>
    <scope>IDENTIFICATION BY MASS SPECTROMETRY [LARGE SCALE ANALYSIS]</scope>
    <source>
        <tissue>Cervix carcinoma</tissue>
    </source>
</reference>
<reference key="6">
    <citation type="journal article" date="2009" name="Sci. Signal.">
        <title>Quantitative phosphoproteomic analysis of T cell receptor signaling reveals system-wide modulation of protein-protein interactions.</title>
        <authorList>
            <person name="Mayya V."/>
            <person name="Lundgren D.H."/>
            <person name="Hwang S.-I."/>
            <person name="Rezaul K."/>
            <person name="Wu L."/>
            <person name="Eng J.K."/>
            <person name="Rodionov V."/>
            <person name="Han D.K."/>
        </authorList>
    </citation>
    <scope>PHOSPHORYLATION [LARGE SCALE ANALYSIS] AT SER-252</scope>
    <scope>IDENTIFICATION BY MASS SPECTROMETRY [LARGE SCALE ANALYSIS]</scope>
    <source>
        <tissue>Leukemic T-cell</tissue>
    </source>
</reference>
<reference key="7">
    <citation type="journal article" date="2010" name="Sci. Signal.">
        <title>Quantitative phosphoproteomics reveals widespread full phosphorylation site occupancy during mitosis.</title>
        <authorList>
            <person name="Olsen J.V."/>
            <person name="Vermeulen M."/>
            <person name="Santamaria A."/>
            <person name="Kumar C."/>
            <person name="Miller M.L."/>
            <person name="Jensen L.J."/>
            <person name="Gnad F."/>
            <person name="Cox J."/>
            <person name="Jensen T.S."/>
            <person name="Nigg E.A."/>
            <person name="Brunak S."/>
            <person name="Mann M."/>
        </authorList>
    </citation>
    <scope>IDENTIFICATION BY MASS SPECTROMETRY [LARGE SCALE ANALYSIS]</scope>
    <source>
        <tissue>Cervix carcinoma</tissue>
    </source>
</reference>
<reference key="8">
    <citation type="journal article" date="2011" name="BMC Syst. Biol.">
        <title>Initial characterization of the human central proteome.</title>
        <authorList>
            <person name="Burkard T.R."/>
            <person name="Planyavsky M."/>
            <person name="Kaupe I."/>
            <person name="Breitwieser F.P."/>
            <person name="Buerckstuemmer T."/>
            <person name="Bennett K.L."/>
            <person name="Superti-Furga G."/>
            <person name="Colinge J."/>
        </authorList>
    </citation>
    <scope>IDENTIFICATION BY MASS SPECTROMETRY [LARGE SCALE ANALYSIS]</scope>
</reference>
<reference key="9">
    <citation type="journal article" date="2011" name="Sci. Signal.">
        <title>System-wide temporal characterization of the proteome and phosphoproteome of human embryonic stem cell differentiation.</title>
        <authorList>
            <person name="Rigbolt K.T."/>
            <person name="Prokhorova T.A."/>
            <person name="Akimov V."/>
            <person name="Henningsen J."/>
            <person name="Johansen P.T."/>
            <person name="Kratchmarova I."/>
            <person name="Kassem M."/>
            <person name="Mann M."/>
            <person name="Olsen J.V."/>
            <person name="Blagoev B."/>
        </authorList>
    </citation>
    <scope>IDENTIFICATION BY MASS SPECTROMETRY [LARGE SCALE ANALYSIS]</scope>
</reference>
<reference key="10">
    <citation type="journal article" date="2012" name="Mol. Cell. Proteomics">
        <title>Comparative large-scale characterisation of plant vs. mammal proteins reveals similar and idiosyncratic N-alpha acetylation features.</title>
        <authorList>
            <person name="Bienvenut W.V."/>
            <person name="Sumpton D."/>
            <person name="Martinez A."/>
            <person name="Lilla S."/>
            <person name="Espagne C."/>
            <person name="Meinnel T."/>
            <person name="Giglione C."/>
        </authorList>
    </citation>
    <scope>ACETYLATION [LARGE SCALE ANALYSIS] AT ALA-2</scope>
    <scope>CLEAVAGE OF INITIATOR METHIONINE [LARGE SCALE ANALYSIS]</scope>
    <scope>IDENTIFICATION BY MASS SPECTROMETRY [LARGE SCALE ANALYSIS]</scope>
</reference>
<reference key="11">
    <citation type="journal article" date="2013" name="J. Proteome Res.">
        <title>Toward a comprehensive characterization of a human cancer cell phosphoproteome.</title>
        <authorList>
            <person name="Zhou H."/>
            <person name="Di Palma S."/>
            <person name="Preisinger C."/>
            <person name="Peng M."/>
            <person name="Polat A.N."/>
            <person name="Heck A.J."/>
            <person name="Mohammed S."/>
        </authorList>
    </citation>
    <scope>PHOSPHORYLATION [LARGE SCALE ANALYSIS] AT SER-153</scope>
    <scope>IDENTIFICATION BY MASS SPECTROMETRY [LARGE SCALE ANALYSIS]</scope>
    <source>
        <tissue>Cervix carcinoma</tissue>
        <tissue>Erythroleukemia</tissue>
    </source>
</reference>
<reference key="12">
    <citation type="journal article" date="2014" name="J. Proteomics">
        <title>An enzyme assisted RP-RPLC approach for in-depth analysis of human liver phosphoproteome.</title>
        <authorList>
            <person name="Bian Y."/>
            <person name="Song C."/>
            <person name="Cheng K."/>
            <person name="Dong M."/>
            <person name="Wang F."/>
            <person name="Huang J."/>
            <person name="Sun D."/>
            <person name="Wang L."/>
            <person name="Ye M."/>
            <person name="Zou H."/>
        </authorList>
    </citation>
    <scope>IDENTIFICATION BY MASS SPECTROMETRY [LARGE SCALE ANALYSIS]</scope>
    <source>
        <tissue>Liver</tissue>
    </source>
</reference>
<reference key="13">
    <citation type="journal article" date="2014" name="Mol. Cell. Proteomics">
        <title>Immunoaffinity enrichment and mass spectrometry analysis of protein methylation.</title>
        <authorList>
            <person name="Guo A."/>
            <person name="Gu H."/>
            <person name="Zhou J."/>
            <person name="Mulhern D."/>
            <person name="Wang Y."/>
            <person name="Lee K.A."/>
            <person name="Yang V."/>
            <person name="Aguiar M."/>
            <person name="Kornhauser J."/>
            <person name="Jia X."/>
            <person name="Ren J."/>
            <person name="Beausoleil S.A."/>
            <person name="Silva J.C."/>
            <person name="Vemulapalli V."/>
            <person name="Bedford M.T."/>
            <person name="Comb M.J."/>
        </authorList>
    </citation>
    <scope>METHYLATION [LARGE SCALE ANALYSIS] AT ARG-231</scope>
    <scope>IDENTIFICATION BY MASS SPECTROMETRY [LARGE SCALE ANALYSIS]</scope>
    <source>
        <tissue>Colon carcinoma</tissue>
    </source>
</reference>
<reference key="14">
    <citation type="journal article" date="2015" name="Proteomics">
        <title>N-terminome analysis of the human mitochondrial proteome.</title>
        <authorList>
            <person name="Vaca Jacome A.S."/>
            <person name="Rabilloud T."/>
            <person name="Schaeffer-Reiss C."/>
            <person name="Rompais M."/>
            <person name="Ayoub D."/>
            <person name="Lane L."/>
            <person name="Bairoch A."/>
            <person name="Van Dorsselaer A."/>
            <person name="Carapito C."/>
        </authorList>
    </citation>
    <scope>ACETYLATION [LARGE SCALE ANALYSIS] AT ALA-2</scope>
    <scope>CLEAVAGE OF INITIATOR METHIONINE [LARGE SCALE ANALYSIS]</scope>
    <scope>IDENTIFICATION BY MASS SPECTROMETRY [LARGE SCALE ANALYSIS]</scope>
</reference>
<reference key="15">
    <citation type="journal article" date="2008" name="J. Biol. Chem.">
        <title>Structure of a conserved dimerization domain within the F-box protein Fbxo7 and the PI31 proteasome inhibitor.</title>
        <authorList>
            <person name="Kirk R."/>
            <person name="Laman H."/>
            <person name="Knowles P.P."/>
            <person name="Murray-Rust J."/>
            <person name="Lomonosov M."/>
            <person name="Meziane E.K."/>
            <person name="McDonald N.Q."/>
        </authorList>
    </citation>
    <scope>X-RAY CRYSTALLOGRAPHY (2.60 ANGSTROMS) OF 1-151</scope>
    <scope>INTERACTION WITH FBXO7</scope>
    <scope>SUBCELLULAR LOCATION</scope>
    <scope>SUBUNIT</scope>
    <scope>MUTAGENESIS OF VAL-6; ILE-83 AND ILE-90</scope>
</reference>
<keyword id="KW-0002">3D-structure</keyword>
<keyword id="KW-0007">Acetylation</keyword>
<keyword id="KW-0963">Cytoplasm</keyword>
<keyword id="KW-0256">Endoplasmic reticulum</keyword>
<keyword id="KW-0488">Methylation</keyword>
<keyword id="KW-0597">Phosphoprotein</keyword>
<keyword id="KW-0647">Proteasome</keyword>
<keyword id="KW-1267">Proteomics identification</keyword>
<keyword id="KW-1185">Reference proteome</keyword>
<accession>Q92530</accession>
<accession>A0AVQ9</accession>
<accession>D3DVW3</accession>
<accession>Q9H4I1</accession>
<sequence length="271" mass="29817">MAGLEVLFASAAPAITCRQDALVCFLHWEVVTHGYFGLGVGDQPGPNDKKSELLPAGWNNNKDLYVLRYEYKDGSRKLLVKAITVESSMILNVLEYGSQQVADLTLNLDDYIDAEHLGDFHRTYKNSEELRSRIVSGIITPIHEQWEKANVSSPHREFPPATAREVDPLRIPPHHPHTSRQPPWCDPLGPFVVGGEDLDPFGPRRGGMIVDPLRSGFPRALIDPSSGLPNRLPPGAVPPGARFDPFGPIGTSPPGPNPDHLPPPGYDDMYL</sequence>
<gene>
    <name type="primary">PSMF1</name>
</gene>
<dbReference type="EMBL" id="D88378">
    <property type="protein sequence ID" value="BAA13603.1"/>
    <property type="molecule type" value="mRNA"/>
</dbReference>
<dbReference type="EMBL" id="AL031665">
    <property type="status" value="NOT_ANNOTATED_CDS"/>
    <property type="molecule type" value="Genomic_DNA"/>
</dbReference>
<dbReference type="EMBL" id="CH471133">
    <property type="protein sequence ID" value="EAX10650.1"/>
    <property type="molecule type" value="Genomic_DNA"/>
</dbReference>
<dbReference type="EMBL" id="CH471133">
    <property type="protein sequence ID" value="EAX10651.1"/>
    <property type="molecule type" value="Genomic_DNA"/>
</dbReference>
<dbReference type="EMBL" id="BC126462">
    <property type="protein sequence ID" value="AAI26463.1"/>
    <property type="molecule type" value="mRNA"/>
</dbReference>
<dbReference type="CCDS" id="CCDS13010.1"/>
<dbReference type="RefSeq" id="NP_001310336.1">
    <property type="nucleotide sequence ID" value="NM_001323407.1"/>
</dbReference>
<dbReference type="RefSeq" id="NP_006805.2">
    <property type="nucleotide sequence ID" value="NM_006814.5"/>
</dbReference>
<dbReference type="RefSeq" id="NP_848693.2">
    <property type="nucleotide sequence ID" value="NM_178578.4"/>
</dbReference>
<dbReference type="PDB" id="2VT8">
    <property type="method" value="X-ray"/>
    <property type="resolution" value="2.60 A"/>
    <property type="chains" value="A/B=1-151"/>
</dbReference>
<dbReference type="PDB" id="4OUH">
    <property type="method" value="X-ray"/>
    <property type="resolution" value="2.00 A"/>
    <property type="chains" value="A/B/C/D=1-158"/>
</dbReference>
<dbReference type="PDBsum" id="2VT8"/>
<dbReference type="PDBsum" id="4OUH"/>
<dbReference type="SMR" id="Q92530"/>
<dbReference type="BioGRID" id="114872">
    <property type="interactions" value="111"/>
</dbReference>
<dbReference type="FunCoup" id="Q92530">
    <property type="interactions" value="2916"/>
</dbReference>
<dbReference type="IntAct" id="Q92530">
    <property type="interactions" value="73"/>
</dbReference>
<dbReference type="MINT" id="Q92530"/>
<dbReference type="STRING" id="9606.ENSP00000338039"/>
<dbReference type="GlyGen" id="Q92530">
    <property type="glycosylation" value="1 site, 1 O-linked glycan (1 site)"/>
</dbReference>
<dbReference type="iPTMnet" id="Q92530"/>
<dbReference type="PhosphoSitePlus" id="Q92530"/>
<dbReference type="SwissPalm" id="Q92530"/>
<dbReference type="BioMuta" id="PSMF1"/>
<dbReference type="DMDM" id="134047876"/>
<dbReference type="jPOST" id="Q92530"/>
<dbReference type="MassIVE" id="Q92530"/>
<dbReference type="PaxDb" id="9606-ENSP00000338039"/>
<dbReference type="PeptideAtlas" id="Q92530"/>
<dbReference type="ProteomicsDB" id="75291"/>
<dbReference type="Pumba" id="Q92530"/>
<dbReference type="Antibodypedia" id="23029">
    <property type="antibodies" value="281 antibodies from 35 providers"/>
</dbReference>
<dbReference type="DNASU" id="9491"/>
<dbReference type="Ensembl" id="ENST00000333082.7">
    <property type="protein sequence ID" value="ENSP00000327704.3"/>
    <property type="gene ID" value="ENSG00000125818.18"/>
</dbReference>
<dbReference type="Ensembl" id="ENST00000335877.11">
    <property type="protein sequence ID" value="ENSP00000338039.6"/>
    <property type="gene ID" value="ENSG00000125818.18"/>
</dbReference>
<dbReference type="GeneID" id="9491"/>
<dbReference type="KEGG" id="hsa:9491"/>
<dbReference type="MANE-Select" id="ENST00000335877.11">
    <property type="protein sequence ID" value="ENSP00000338039.6"/>
    <property type="RefSeq nucleotide sequence ID" value="NM_006814.5"/>
    <property type="RefSeq protein sequence ID" value="NP_006805.2"/>
</dbReference>
<dbReference type="UCSC" id="uc002wel.4">
    <property type="organism name" value="human"/>
</dbReference>
<dbReference type="AGR" id="HGNC:9571"/>
<dbReference type="CTD" id="9491"/>
<dbReference type="DisGeNET" id="9491"/>
<dbReference type="GeneCards" id="PSMF1"/>
<dbReference type="HGNC" id="HGNC:9571">
    <property type="gene designation" value="PSMF1"/>
</dbReference>
<dbReference type="HPA" id="ENSG00000125818">
    <property type="expression patterns" value="Low tissue specificity"/>
</dbReference>
<dbReference type="MIM" id="617858">
    <property type="type" value="gene"/>
</dbReference>
<dbReference type="neXtProt" id="NX_Q92530"/>
<dbReference type="OpenTargets" id="ENSG00000125818"/>
<dbReference type="PharmGKB" id="PA33917"/>
<dbReference type="VEuPathDB" id="HostDB:ENSG00000125818"/>
<dbReference type="eggNOG" id="KOG4761">
    <property type="taxonomic scope" value="Eukaryota"/>
</dbReference>
<dbReference type="GeneTree" id="ENSGT00390000012257"/>
<dbReference type="HOGENOM" id="CLU_090116_0_0_1"/>
<dbReference type="InParanoid" id="Q92530"/>
<dbReference type="OMA" id="PFGFPDI"/>
<dbReference type="OrthoDB" id="68090at2759"/>
<dbReference type="PAN-GO" id="Q92530">
    <property type="GO annotations" value="1 GO annotation based on evolutionary models"/>
</dbReference>
<dbReference type="PhylomeDB" id="Q92530"/>
<dbReference type="TreeFam" id="TF106238"/>
<dbReference type="PathwayCommons" id="Q92530"/>
<dbReference type="Reactome" id="R-HSA-9907900">
    <property type="pathway name" value="Proteasome assembly"/>
</dbReference>
<dbReference type="SignaLink" id="Q92530"/>
<dbReference type="SIGNOR" id="Q92530"/>
<dbReference type="BioGRID-ORCS" id="9491">
    <property type="hits" value="108 hits in 1173 CRISPR screens"/>
</dbReference>
<dbReference type="ChiTaRS" id="PSMF1">
    <property type="organism name" value="human"/>
</dbReference>
<dbReference type="EvolutionaryTrace" id="Q92530"/>
<dbReference type="GeneWiki" id="PSMF1"/>
<dbReference type="GenomeRNAi" id="9491"/>
<dbReference type="Pharos" id="Q92530">
    <property type="development level" value="Tbio"/>
</dbReference>
<dbReference type="PRO" id="PR:Q92530"/>
<dbReference type="Proteomes" id="UP000005640">
    <property type="component" value="Chromosome 20"/>
</dbReference>
<dbReference type="RNAct" id="Q92530">
    <property type="molecule type" value="protein"/>
</dbReference>
<dbReference type="Bgee" id="ENSG00000125818">
    <property type="expression patterns" value="Expressed in sperm and 213 other cell types or tissues"/>
</dbReference>
<dbReference type="ExpressionAtlas" id="Q92530">
    <property type="expression patterns" value="baseline and differential"/>
</dbReference>
<dbReference type="GO" id="GO:0005829">
    <property type="term" value="C:cytosol"/>
    <property type="evidence" value="ECO:0000314"/>
    <property type="project" value="UniProtKB"/>
</dbReference>
<dbReference type="GO" id="GO:0005783">
    <property type="term" value="C:endoplasmic reticulum"/>
    <property type="evidence" value="ECO:0000314"/>
    <property type="project" value="UniProtKB"/>
</dbReference>
<dbReference type="GO" id="GO:0016020">
    <property type="term" value="C:membrane"/>
    <property type="evidence" value="ECO:0007005"/>
    <property type="project" value="UniProtKB"/>
</dbReference>
<dbReference type="GO" id="GO:0048471">
    <property type="term" value="C:perinuclear region of cytoplasm"/>
    <property type="evidence" value="ECO:0000314"/>
    <property type="project" value="ParkinsonsUK-UCL"/>
</dbReference>
<dbReference type="GO" id="GO:0005839">
    <property type="term" value="C:proteasome core complex"/>
    <property type="evidence" value="ECO:0000303"/>
    <property type="project" value="UniProtKB"/>
</dbReference>
<dbReference type="GO" id="GO:0004866">
    <property type="term" value="F:endopeptidase inhibitor activity"/>
    <property type="evidence" value="ECO:0000303"/>
    <property type="project" value="UniProtKB"/>
</dbReference>
<dbReference type="GO" id="GO:0070628">
    <property type="term" value="F:proteasome binding"/>
    <property type="evidence" value="ECO:0000314"/>
    <property type="project" value="UniProtKB"/>
</dbReference>
<dbReference type="GO" id="GO:0046982">
    <property type="term" value="F:protein heterodimerization activity"/>
    <property type="evidence" value="ECO:0000353"/>
    <property type="project" value="ParkinsonsUK-UCL"/>
</dbReference>
<dbReference type="GO" id="GO:0042803">
    <property type="term" value="F:protein homodimerization activity"/>
    <property type="evidence" value="ECO:0000353"/>
    <property type="project" value="ParkinsonsUK-UCL"/>
</dbReference>
<dbReference type="GO" id="GO:1901799">
    <property type="term" value="P:negative regulation of proteasomal protein catabolic process"/>
    <property type="evidence" value="ECO:0000314"/>
    <property type="project" value="UniProtKB"/>
</dbReference>
<dbReference type="GO" id="GO:0043161">
    <property type="term" value="P:proteasome-mediated ubiquitin-dependent protein catabolic process"/>
    <property type="evidence" value="ECO:0007669"/>
    <property type="project" value="InterPro"/>
</dbReference>
<dbReference type="GO" id="GO:0006511">
    <property type="term" value="P:ubiquitin-dependent protein catabolic process"/>
    <property type="evidence" value="ECO:0000314"/>
    <property type="project" value="UniProtKB"/>
</dbReference>
<dbReference type="FunFam" id="3.40.1000.30:FF:000002">
    <property type="entry name" value="Proteasome inhibitor PI31 subunit"/>
    <property type="match status" value="1"/>
</dbReference>
<dbReference type="Gene3D" id="3.40.1000.30">
    <property type="match status" value="1"/>
</dbReference>
<dbReference type="InterPro" id="IPR045128">
    <property type="entry name" value="PI31-like"/>
</dbReference>
<dbReference type="InterPro" id="IPR013886">
    <property type="entry name" value="PI31_Prot_C"/>
</dbReference>
<dbReference type="InterPro" id="IPR021625">
    <property type="entry name" value="PI31_Prot_N"/>
</dbReference>
<dbReference type="PANTHER" id="PTHR13266">
    <property type="entry name" value="PROTEASOME INHIBITOR"/>
    <property type="match status" value="1"/>
</dbReference>
<dbReference type="PANTHER" id="PTHR13266:SF1">
    <property type="entry name" value="PROTEASOME INHIBITOR PI31 SUBUNIT"/>
    <property type="match status" value="1"/>
</dbReference>
<dbReference type="Pfam" id="PF08577">
    <property type="entry name" value="PI31_Prot_C"/>
    <property type="match status" value="1"/>
</dbReference>
<dbReference type="Pfam" id="PF11566">
    <property type="entry name" value="PI31_Prot_N"/>
    <property type="match status" value="1"/>
</dbReference>
<evidence type="ECO:0000250" key="1">
    <source>
        <dbReference type="UniProtKB" id="Q8BHL8"/>
    </source>
</evidence>
<evidence type="ECO:0000256" key="2">
    <source>
        <dbReference type="SAM" id="MobiDB-lite"/>
    </source>
</evidence>
<evidence type="ECO:0000269" key="3">
    <source>
    </source>
</evidence>
<evidence type="ECO:0000269" key="4">
    <source>
    </source>
</evidence>
<evidence type="ECO:0000269" key="5">
    <source>
    </source>
</evidence>
<evidence type="ECO:0000269" key="6">
    <source ref="3"/>
</evidence>
<evidence type="ECO:0000305" key="7"/>
<evidence type="ECO:0007744" key="8">
    <source>
    </source>
</evidence>
<evidence type="ECO:0007744" key="9">
    <source>
    </source>
</evidence>
<evidence type="ECO:0007744" key="10">
    <source>
    </source>
</evidence>
<evidence type="ECO:0007744" key="11">
    <source>
    </source>
</evidence>
<evidence type="ECO:0007744" key="12">
    <source>
    </source>
</evidence>
<evidence type="ECO:0007744" key="13">
    <source>
    </source>
</evidence>
<evidence type="ECO:0007829" key="14">
    <source>
        <dbReference type="PDB" id="2VT8"/>
    </source>
</evidence>
<evidence type="ECO:0007829" key="15">
    <source>
        <dbReference type="PDB" id="4OUH"/>
    </source>
</evidence>
<feature type="initiator methionine" description="Removed" evidence="10 13">
    <location>
        <position position="1"/>
    </location>
</feature>
<feature type="chain" id="PRO_0000220920" description="Proteasome inhibitor PI31 subunit">
    <location>
        <begin position="2"/>
        <end position="271"/>
    </location>
</feature>
<feature type="region of interest" description="Important for homodimerization and interaction with FBXO7" evidence="5">
    <location>
        <begin position="2"/>
        <end position="150"/>
    </location>
</feature>
<feature type="region of interest" description="Disordered" evidence="2">
    <location>
        <begin position="222"/>
        <end position="271"/>
    </location>
</feature>
<feature type="compositionally biased region" description="Pro residues" evidence="2">
    <location>
        <begin position="251"/>
        <end position="265"/>
    </location>
</feature>
<feature type="modified residue" description="N-acetylalanine" evidence="10 13">
    <location>
        <position position="2"/>
    </location>
</feature>
<feature type="modified residue" description="Phosphoserine" evidence="11">
    <location>
        <position position="153"/>
    </location>
</feature>
<feature type="modified residue" description="Omega-N-methylarginine" evidence="1">
    <location>
        <position position="205"/>
    </location>
</feature>
<feature type="modified residue" description="Asymmetric dimethylarginine" evidence="1">
    <location>
        <position position="219"/>
    </location>
</feature>
<feature type="modified residue" description="Omega-N-methylarginine" evidence="12">
    <location>
        <position position="231"/>
    </location>
</feature>
<feature type="modified residue" description="Phosphoserine" evidence="8 9">
    <location>
        <position position="252"/>
    </location>
</feature>
<feature type="sequence variant" id="VAR_024564" description="In dbSNP:rs1803415." evidence="3 4 6">
    <original>F</original>
    <variation>C</variation>
    <location>
        <position position="36"/>
    </location>
</feature>
<feature type="sequence variant" id="VAR_022153" description="In dbSNP:rs2235587.">
    <original>H</original>
    <variation>R</variation>
    <location>
        <position position="174"/>
    </location>
</feature>
<feature type="mutagenesis site" description="Abolishes homodimerization." evidence="5">
    <original>V</original>
    <variation>R</variation>
    <location>
        <position position="6"/>
    </location>
</feature>
<feature type="mutagenesis site" description="Abolishes interaction with FBXO7, but has no effect on homodimerization; when associated with E-90." evidence="5">
    <original>I</original>
    <variation>E</variation>
    <location>
        <position position="83"/>
    </location>
</feature>
<feature type="mutagenesis site" description="Abolishes interaction with FBXO7, but has no effect on homodimerization; when associated with E-83." evidence="5">
    <original>I</original>
    <variation>E</variation>
    <location>
        <position position="90"/>
    </location>
</feature>
<feature type="helix" evidence="15">
    <location>
        <begin position="4"/>
        <end position="11"/>
    </location>
</feature>
<feature type="helix" evidence="15">
    <location>
        <begin position="12"/>
        <end position="14"/>
    </location>
</feature>
<feature type="helix" evidence="15">
    <location>
        <begin position="18"/>
        <end position="31"/>
    </location>
</feature>
<feature type="turn" evidence="15">
    <location>
        <begin position="32"/>
        <end position="34"/>
    </location>
</feature>
<feature type="strand" evidence="15">
    <location>
        <begin position="35"/>
        <end position="43"/>
    </location>
</feature>
<feature type="strand" evidence="15">
    <location>
        <begin position="51"/>
        <end position="53"/>
    </location>
</feature>
<feature type="turn" evidence="15">
    <location>
        <begin position="56"/>
        <end position="59"/>
    </location>
</feature>
<feature type="strand" evidence="15">
    <location>
        <begin position="62"/>
        <end position="73"/>
    </location>
</feature>
<feature type="strand" evidence="15">
    <location>
        <begin position="77"/>
        <end position="85"/>
    </location>
</feature>
<feature type="strand" evidence="15">
    <location>
        <begin position="88"/>
        <end position="94"/>
    </location>
</feature>
<feature type="turn" evidence="14">
    <location>
        <begin position="96"/>
        <end position="99"/>
    </location>
</feature>
<feature type="strand" evidence="15">
    <location>
        <begin position="101"/>
        <end position="107"/>
    </location>
</feature>
<feature type="helix" evidence="15">
    <location>
        <begin position="108"/>
        <end position="111"/>
    </location>
</feature>
<feature type="turn" evidence="15">
    <location>
        <begin position="115"/>
        <end position="118"/>
    </location>
</feature>
<feature type="helix" evidence="15">
    <location>
        <begin position="120"/>
        <end position="123"/>
    </location>
</feature>
<feature type="strand" evidence="15">
    <location>
        <begin position="124"/>
        <end position="126"/>
    </location>
</feature>
<feature type="helix" evidence="15">
    <location>
        <begin position="127"/>
        <end position="137"/>
    </location>
</feature>
<feature type="helix" evidence="15">
    <location>
        <begin position="139"/>
        <end position="149"/>
    </location>
</feature>
<protein>
    <recommendedName>
        <fullName>Proteasome inhibitor PI31 subunit</fullName>
        <shortName>hPI31</shortName>
    </recommendedName>
</protein>
<comment type="function">
    <text evidence="3">Plays an important role in control of proteasome function. Inhibits the hydrolysis of protein and peptide substrates by the 20S proteasome. Also inhibits the activation of the proteasome by the proteasome regulatory proteins PA700 and PA28.</text>
</comment>
<comment type="subunit">
    <text evidence="3 5">Monomer and homodimer. Interacts with FBXO7. Interacts with the 20S proteasome.</text>
</comment>
<comment type="interaction">
    <interactant intactId="EBI-945916">
        <id>Q92530</id>
    </interactant>
    <interactant intactId="EBI-768015">
        <id>O95400</id>
        <label>CD2BP2</label>
    </interactant>
    <organismsDiffer>false</organismsDiffer>
    <experiments>2</experiments>
</comment>
<comment type="interaction">
    <interactant intactId="EBI-945916">
        <id>Q92530</id>
    </interactant>
    <interactant intactId="EBI-1161222">
        <id>Q9Y3I1</id>
        <label>FBXO7</label>
    </interactant>
    <organismsDiffer>false</organismsDiffer>
    <experiments>11</experiments>
</comment>
<comment type="interaction">
    <interactant intactId="EBI-945916">
        <id>Q92530</id>
    </interactant>
    <interactant intactId="EBI-10226858">
        <id>Q0VDC6</id>
        <label>FKBP1A</label>
    </interactant>
    <organismsDiffer>false</organismsDiffer>
    <experiments>3</experiments>
</comment>
<comment type="interaction">
    <interactant intactId="EBI-945916">
        <id>Q92530</id>
    </interactant>
    <interactant intactId="EBI-356991">
        <id>P54652</id>
        <label>HSPA2</label>
    </interactant>
    <organismsDiffer>false</organismsDiffer>
    <experiments>3</experiments>
</comment>
<comment type="interaction">
    <interactant intactId="EBI-945916">
        <id>Q92530</id>
    </interactant>
    <interactant intactId="EBI-740738">
        <id>O95751</id>
        <label>LDOC1</label>
    </interactant>
    <organismsDiffer>false</organismsDiffer>
    <experiments>3</experiments>
</comment>
<comment type="interaction">
    <interactant intactId="EBI-945916">
        <id>Q92530</id>
    </interactant>
    <interactant intactId="EBI-739832">
        <id>Q8TBB1</id>
        <label>LNX1</label>
    </interactant>
    <organismsDiffer>false</organismsDiffer>
    <experiments>3</experiments>
</comment>
<comment type="interaction">
    <interactant intactId="EBI-945916">
        <id>Q92530</id>
    </interactant>
    <interactant intactId="EBI-741896">
        <id>Q9P286</id>
        <label>PAK5</label>
    </interactant>
    <organismsDiffer>false</organismsDiffer>
    <experiments>3</experiments>
</comment>
<comment type="interaction">
    <interactant intactId="EBI-945916">
        <id>Q92530</id>
    </interactant>
    <interactant intactId="EBI-603272">
        <id>O14818</id>
        <label>PSMA7</label>
    </interactant>
    <organismsDiffer>false</organismsDiffer>
    <experiments>3</experiments>
</comment>
<comment type="interaction">
    <interactant intactId="EBI-945916">
        <id>Q92530</id>
    </interactant>
    <interactant intactId="EBI-744685">
        <id>Q14088</id>
        <label>RAB33A</label>
    </interactant>
    <organismsDiffer>false</organismsDiffer>
    <experiments>3</experiments>
</comment>
<comment type="interaction">
    <interactant intactId="EBI-945916">
        <id>Q92530</id>
    </interactant>
    <interactant intactId="EBI-945906">
        <id>Q9NWB1</id>
        <label>RBFOX1</label>
    </interactant>
    <organismsDiffer>false</organismsDiffer>
    <experiments>2</experiments>
</comment>
<comment type="interaction">
    <interactant intactId="EBI-945916">
        <id>Q92530</id>
    </interactant>
    <interactant intactId="EBI-752030">
        <id>Q96A09</id>
        <label>TENT5B</label>
    </interactant>
    <organismsDiffer>false</organismsDiffer>
    <experiments>3</experiments>
</comment>
<comment type="interaction">
    <interactant intactId="EBI-945916">
        <id>Q92530</id>
    </interactant>
    <interactant intactId="EBI-10259086">
        <id>Q86UV6-2</id>
        <label>TRIM74</label>
    </interactant>
    <organismsDiffer>false</organismsDiffer>
    <experiments>3</experiments>
</comment>
<comment type="subcellular location">
    <subcellularLocation>
        <location evidence="5">Cytoplasm</location>
    </subcellularLocation>
    <subcellularLocation>
        <location evidence="5">Endoplasmic reticulum</location>
    </subcellularLocation>
</comment>
<comment type="similarity">
    <text evidence="7">Belongs to the proteasome inhibitor PI31 family.</text>
</comment>